<gene>
    <name evidence="1" type="primary">pyrB</name>
    <name type="ordered locus">SAUSA300_1093</name>
</gene>
<evidence type="ECO:0000255" key="1">
    <source>
        <dbReference type="HAMAP-Rule" id="MF_00001"/>
    </source>
</evidence>
<name>PYRB_STAA3</name>
<comment type="function">
    <text evidence="1">Catalyzes the condensation of carbamoyl phosphate and aspartate to form carbamoyl aspartate and inorganic phosphate, the committed step in the de novo pyrimidine nucleotide biosynthesis pathway.</text>
</comment>
<comment type="catalytic activity">
    <reaction evidence="1">
        <text>carbamoyl phosphate + L-aspartate = N-carbamoyl-L-aspartate + phosphate + H(+)</text>
        <dbReference type="Rhea" id="RHEA:20013"/>
        <dbReference type="ChEBI" id="CHEBI:15378"/>
        <dbReference type="ChEBI" id="CHEBI:29991"/>
        <dbReference type="ChEBI" id="CHEBI:32814"/>
        <dbReference type="ChEBI" id="CHEBI:43474"/>
        <dbReference type="ChEBI" id="CHEBI:58228"/>
        <dbReference type="EC" id="2.1.3.2"/>
    </reaction>
</comment>
<comment type="pathway">
    <text evidence="1">Pyrimidine metabolism; UMP biosynthesis via de novo pathway; (S)-dihydroorotate from bicarbonate: step 2/3.</text>
</comment>
<comment type="subunit">
    <text evidence="1">Heterododecamer (2C3:3R2) of six catalytic PyrB chains organized as two trimers (C3), and six regulatory PyrI chains organized as three dimers (R2).</text>
</comment>
<comment type="similarity">
    <text evidence="1">Belongs to the aspartate/ornithine carbamoyltransferase superfamily. ATCase family.</text>
</comment>
<organism>
    <name type="scientific">Staphylococcus aureus (strain USA300)</name>
    <dbReference type="NCBI Taxonomy" id="367830"/>
    <lineage>
        <taxon>Bacteria</taxon>
        <taxon>Bacillati</taxon>
        <taxon>Bacillota</taxon>
        <taxon>Bacilli</taxon>
        <taxon>Bacillales</taxon>
        <taxon>Staphylococcaceae</taxon>
        <taxon>Staphylococcus</taxon>
    </lineage>
</organism>
<sequence length="293" mass="33258">MNHLLSMEHLSTDQIYKLIQKASQFKSGERQLPNFEGKYVANLFFENSTRTKCSFEMAELKLGLKTISFETSTSSVSKGESLYDTCKTLESIGCDLLVIRHPFNNYYEKLANINIPIANAGDGSGQHPTQSLLDLMTIYEEYGYFEGLNVLICGDIKNSRVARSNYHSLKALGANVMFNSPNAWIDDSLEAPYVNIDDVIETVDIVMLLRIQHERHGLAEETRFAADDYHQKHGLNEVRYNKLQEHAIVMHPAPVNRGVEIQSDLVEASKSRIFKQMENGVYLRMAVIDELLK</sequence>
<proteinExistence type="inferred from homology"/>
<keyword id="KW-0665">Pyrimidine biosynthesis</keyword>
<keyword id="KW-0808">Transferase</keyword>
<reference key="1">
    <citation type="journal article" date="2006" name="Lancet">
        <title>Complete genome sequence of USA300, an epidemic clone of community-acquired meticillin-resistant Staphylococcus aureus.</title>
        <authorList>
            <person name="Diep B.A."/>
            <person name="Gill S.R."/>
            <person name="Chang R.F."/>
            <person name="Phan T.H."/>
            <person name="Chen J.H."/>
            <person name="Davidson M.G."/>
            <person name="Lin F."/>
            <person name="Lin J."/>
            <person name="Carleton H.A."/>
            <person name="Mongodin E.F."/>
            <person name="Sensabaugh G.F."/>
            <person name="Perdreau-Remington F."/>
        </authorList>
    </citation>
    <scope>NUCLEOTIDE SEQUENCE [LARGE SCALE GENOMIC DNA]</scope>
    <source>
        <strain>USA300</strain>
    </source>
</reference>
<feature type="chain" id="PRO_0000301624" description="Aspartate carbamoyltransferase catalytic subunit">
    <location>
        <begin position="1"/>
        <end position="293"/>
    </location>
</feature>
<feature type="binding site" evidence="1">
    <location>
        <position position="50"/>
    </location>
    <ligand>
        <name>carbamoyl phosphate</name>
        <dbReference type="ChEBI" id="CHEBI:58228"/>
    </ligand>
</feature>
<feature type="binding site" evidence="1">
    <location>
        <position position="51"/>
    </location>
    <ligand>
        <name>carbamoyl phosphate</name>
        <dbReference type="ChEBI" id="CHEBI:58228"/>
    </ligand>
</feature>
<feature type="binding site" evidence="1">
    <location>
        <position position="78"/>
    </location>
    <ligand>
        <name>L-aspartate</name>
        <dbReference type="ChEBI" id="CHEBI:29991"/>
    </ligand>
</feature>
<feature type="binding site" evidence="1">
    <location>
        <position position="100"/>
    </location>
    <ligand>
        <name>carbamoyl phosphate</name>
        <dbReference type="ChEBI" id="CHEBI:58228"/>
    </ligand>
</feature>
<feature type="binding site" evidence="1">
    <location>
        <position position="127"/>
    </location>
    <ligand>
        <name>carbamoyl phosphate</name>
        <dbReference type="ChEBI" id="CHEBI:58228"/>
    </ligand>
</feature>
<feature type="binding site" evidence="1">
    <location>
        <position position="130"/>
    </location>
    <ligand>
        <name>carbamoyl phosphate</name>
        <dbReference type="ChEBI" id="CHEBI:58228"/>
    </ligand>
</feature>
<feature type="binding site" evidence="1">
    <location>
        <position position="160"/>
    </location>
    <ligand>
        <name>L-aspartate</name>
        <dbReference type="ChEBI" id="CHEBI:29991"/>
    </ligand>
</feature>
<feature type="binding site" evidence="1">
    <location>
        <position position="210"/>
    </location>
    <ligand>
        <name>L-aspartate</name>
        <dbReference type="ChEBI" id="CHEBI:29991"/>
    </ligand>
</feature>
<feature type="binding site" evidence="1">
    <location>
        <position position="253"/>
    </location>
    <ligand>
        <name>carbamoyl phosphate</name>
        <dbReference type="ChEBI" id="CHEBI:58228"/>
    </ligand>
</feature>
<feature type="binding site" evidence="1">
    <location>
        <position position="254"/>
    </location>
    <ligand>
        <name>carbamoyl phosphate</name>
        <dbReference type="ChEBI" id="CHEBI:58228"/>
    </ligand>
</feature>
<protein>
    <recommendedName>
        <fullName evidence="1">Aspartate carbamoyltransferase catalytic subunit</fullName>
        <ecNumber evidence="1">2.1.3.2</ecNumber>
    </recommendedName>
    <alternativeName>
        <fullName evidence="1">Aspartate transcarbamylase</fullName>
        <shortName evidence="1">ATCase</shortName>
    </alternativeName>
</protein>
<dbReference type="EC" id="2.1.3.2" evidence="1"/>
<dbReference type="EMBL" id="CP000255">
    <property type="protein sequence ID" value="ABD22224.1"/>
    <property type="molecule type" value="Genomic_DNA"/>
</dbReference>
<dbReference type="RefSeq" id="WP_001016166.1">
    <property type="nucleotide sequence ID" value="NZ_CP027476.1"/>
</dbReference>
<dbReference type="SMR" id="Q2FHN8"/>
<dbReference type="KEGG" id="saa:SAUSA300_1093"/>
<dbReference type="HOGENOM" id="CLU_043846_2_1_9"/>
<dbReference type="OMA" id="VLIMHPG"/>
<dbReference type="UniPathway" id="UPA00070">
    <property type="reaction ID" value="UER00116"/>
</dbReference>
<dbReference type="Proteomes" id="UP000001939">
    <property type="component" value="Chromosome"/>
</dbReference>
<dbReference type="GO" id="GO:0005829">
    <property type="term" value="C:cytosol"/>
    <property type="evidence" value="ECO:0007669"/>
    <property type="project" value="TreeGrafter"/>
</dbReference>
<dbReference type="GO" id="GO:0016597">
    <property type="term" value="F:amino acid binding"/>
    <property type="evidence" value="ECO:0007669"/>
    <property type="project" value="InterPro"/>
</dbReference>
<dbReference type="GO" id="GO:0004070">
    <property type="term" value="F:aspartate carbamoyltransferase activity"/>
    <property type="evidence" value="ECO:0007669"/>
    <property type="project" value="UniProtKB-UniRule"/>
</dbReference>
<dbReference type="GO" id="GO:0006207">
    <property type="term" value="P:'de novo' pyrimidine nucleobase biosynthetic process"/>
    <property type="evidence" value="ECO:0007669"/>
    <property type="project" value="InterPro"/>
</dbReference>
<dbReference type="GO" id="GO:0044205">
    <property type="term" value="P:'de novo' UMP biosynthetic process"/>
    <property type="evidence" value="ECO:0007669"/>
    <property type="project" value="UniProtKB-UniRule"/>
</dbReference>
<dbReference type="GO" id="GO:0006520">
    <property type="term" value="P:amino acid metabolic process"/>
    <property type="evidence" value="ECO:0007669"/>
    <property type="project" value="InterPro"/>
</dbReference>
<dbReference type="FunFam" id="3.40.50.1370:FF:000011">
    <property type="entry name" value="Aspartate carbamoyltransferase"/>
    <property type="match status" value="1"/>
</dbReference>
<dbReference type="Gene3D" id="3.40.50.1370">
    <property type="entry name" value="Aspartate/ornithine carbamoyltransferase"/>
    <property type="match status" value="2"/>
</dbReference>
<dbReference type="HAMAP" id="MF_00001">
    <property type="entry name" value="Asp_carb_tr"/>
    <property type="match status" value="1"/>
</dbReference>
<dbReference type="InterPro" id="IPR006132">
    <property type="entry name" value="Asp/Orn_carbamoyltranf_P-bd"/>
</dbReference>
<dbReference type="InterPro" id="IPR006130">
    <property type="entry name" value="Asp/Orn_carbamoylTrfase"/>
</dbReference>
<dbReference type="InterPro" id="IPR036901">
    <property type="entry name" value="Asp/Orn_carbamoylTrfase_sf"/>
</dbReference>
<dbReference type="InterPro" id="IPR002082">
    <property type="entry name" value="Asp_carbamoyltransf"/>
</dbReference>
<dbReference type="InterPro" id="IPR006131">
    <property type="entry name" value="Asp_carbamoyltransf_Asp/Orn-bd"/>
</dbReference>
<dbReference type="NCBIfam" id="TIGR00670">
    <property type="entry name" value="asp_carb_tr"/>
    <property type="match status" value="1"/>
</dbReference>
<dbReference type="NCBIfam" id="NF002032">
    <property type="entry name" value="PRK00856.1"/>
    <property type="match status" value="1"/>
</dbReference>
<dbReference type="PANTHER" id="PTHR45753:SF6">
    <property type="entry name" value="ASPARTATE CARBAMOYLTRANSFERASE"/>
    <property type="match status" value="1"/>
</dbReference>
<dbReference type="PANTHER" id="PTHR45753">
    <property type="entry name" value="ORNITHINE CARBAMOYLTRANSFERASE, MITOCHONDRIAL"/>
    <property type="match status" value="1"/>
</dbReference>
<dbReference type="Pfam" id="PF00185">
    <property type="entry name" value="OTCace"/>
    <property type="match status" value="1"/>
</dbReference>
<dbReference type="Pfam" id="PF02729">
    <property type="entry name" value="OTCace_N"/>
    <property type="match status" value="1"/>
</dbReference>
<dbReference type="PRINTS" id="PR00100">
    <property type="entry name" value="AOTCASE"/>
</dbReference>
<dbReference type="PRINTS" id="PR00101">
    <property type="entry name" value="ATCASE"/>
</dbReference>
<dbReference type="SUPFAM" id="SSF53671">
    <property type="entry name" value="Aspartate/ornithine carbamoyltransferase"/>
    <property type="match status" value="1"/>
</dbReference>
<dbReference type="PROSITE" id="PS00097">
    <property type="entry name" value="CARBAMOYLTRANSFERASE"/>
    <property type="match status" value="1"/>
</dbReference>
<accession>Q2FHN8</accession>